<name>WLS_MOUSE</name>
<dbReference type="EMBL" id="AK019886">
    <property type="protein sequence ID" value="BAB31904.1"/>
    <property type="molecule type" value="mRNA"/>
</dbReference>
<dbReference type="EMBL" id="AK029053">
    <property type="protein sequence ID" value="BAC26266.1"/>
    <property type="status" value="ALT_INIT"/>
    <property type="molecule type" value="mRNA"/>
</dbReference>
<dbReference type="EMBL" id="AK029104">
    <property type="protein sequence ID" value="BAC26300.1"/>
    <property type="status" value="ALT_INIT"/>
    <property type="molecule type" value="mRNA"/>
</dbReference>
<dbReference type="EMBL" id="AK044810">
    <property type="protein sequence ID" value="BAC32102.1"/>
    <property type="status" value="ALT_INIT"/>
    <property type="molecule type" value="mRNA"/>
</dbReference>
<dbReference type="EMBL" id="AK049842">
    <property type="protein sequence ID" value="BAC33950.1"/>
    <property type="status" value="ALT_INIT"/>
    <property type="molecule type" value="mRNA"/>
</dbReference>
<dbReference type="EMBL" id="AK077407">
    <property type="protein sequence ID" value="BAC36788.1"/>
    <property type="molecule type" value="mRNA"/>
</dbReference>
<dbReference type="EMBL" id="AK159207">
    <property type="protein sequence ID" value="BAE34898.1"/>
    <property type="molecule type" value="mRNA"/>
</dbReference>
<dbReference type="EMBL" id="BC075615">
    <property type="protein sequence ID" value="AAH75615.1"/>
    <property type="molecule type" value="mRNA"/>
</dbReference>
<dbReference type="EMBL" id="BC018381">
    <property type="protein sequence ID" value="AAH18381.1"/>
    <property type="status" value="ALT_INIT"/>
    <property type="molecule type" value="mRNA"/>
</dbReference>
<dbReference type="CCDS" id="CCDS38684.1">
    <molecule id="Q6DID7-1"/>
</dbReference>
<dbReference type="RefSeq" id="NP_001343278.1">
    <molecule id="Q6DID7-2"/>
    <property type="nucleotide sequence ID" value="NM_001356349.1"/>
</dbReference>
<dbReference type="RefSeq" id="NP_001343279.1">
    <molecule id="Q6DID7-1"/>
    <property type="nucleotide sequence ID" value="NM_001356350.1"/>
</dbReference>
<dbReference type="RefSeq" id="NP_080858.3">
    <molecule id="Q6DID7-1"/>
    <property type="nucleotide sequence ID" value="NM_026582.4"/>
</dbReference>
<dbReference type="RefSeq" id="XP_006502027.1">
    <property type="nucleotide sequence ID" value="XM_006501964.2"/>
</dbReference>
<dbReference type="SMR" id="Q6DID7"/>
<dbReference type="BioGRID" id="212684">
    <property type="interactions" value="5"/>
</dbReference>
<dbReference type="DIP" id="DIP-49004N"/>
<dbReference type="FunCoup" id="Q6DID7">
    <property type="interactions" value="1825"/>
</dbReference>
<dbReference type="IntAct" id="Q6DID7">
    <property type="interactions" value="4"/>
</dbReference>
<dbReference type="STRING" id="10090.ENSMUSP00000067898"/>
<dbReference type="GlyGen" id="Q6DID7">
    <property type="glycosylation" value="1 site"/>
</dbReference>
<dbReference type="PhosphoSitePlus" id="Q6DID7"/>
<dbReference type="PaxDb" id="10090-ENSMUSP00000067898"/>
<dbReference type="PeptideAtlas" id="Q6DID7"/>
<dbReference type="ProteomicsDB" id="299790">
    <molecule id="Q6DID7-1"/>
</dbReference>
<dbReference type="ProteomicsDB" id="299791">
    <molecule id="Q6DID7-2"/>
</dbReference>
<dbReference type="Pumba" id="Q6DID7"/>
<dbReference type="Antibodypedia" id="33415">
    <property type="antibodies" value="126 antibodies from 29 providers"/>
</dbReference>
<dbReference type="Ensembl" id="ENSMUST00000068952.10">
    <molecule id="Q6DID7-1"/>
    <property type="protein sequence ID" value="ENSMUSP00000067898.6"/>
    <property type="gene ID" value="ENSMUSG00000028173.11"/>
</dbReference>
<dbReference type="Ensembl" id="ENSMUST00000198878.2">
    <molecule id="Q6DID7-1"/>
    <property type="protein sequence ID" value="ENSMUSP00000143475.2"/>
    <property type="gene ID" value="ENSMUSG00000028173.11"/>
</dbReference>
<dbReference type="GeneID" id="68151"/>
<dbReference type="KEGG" id="mmu:68151"/>
<dbReference type="UCSC" id="uc008rwc.1">
    <molecule id="Q6DID7-1"/>
    <property type="organism name" value="mouse"/>
</dbReference>
<dbReference type="AGR" id="MGI:1915401"/>
<dbReference type="CTD" id="79971"/>
<dbReference type="MGI" id="MGI:1915401">
    <property type="gene designation" value="Wls"/>
</dbReference>
<dbReference type="VEuPathDB" id="HostDB:ENSMUSG00000028173"/>
<dbReference type="eggNOG" id="ENOG502QSE2">
    <property type="taxonomic scope" value="Eukaryota"/>
</dbReference>
<dbReference type="GeneTree" id="ENSGT00390000005897"/>
<dbReference type="HOGENOM" id="CLU_022911_0_0_1"/>
<dbReference type="InParanoid" id="Q6DID7"/>
<dbReference type="OMA" id="GQWKWDE"/>
<dbReference type="OrthoDB" id="5804250at2759"/>
<dbReference type="PhylomeDB" id="Q6DID7"/>
<dbReference type="TreeFam" id="TF105975"/>
<dbReference type="Reactome" id="R-MMU-3238698">
    <property type="pathway name" value="WNT ligand biogenesis and trafficking"/>
</dbReference>
<dbReference type="BioGRID-ORCS" id="68151">
    <property type="hits" value="5 hits in 78 CRISPR screens"/>
</dbReference>
<dbReference type="ChiTaRS" id="Wls">
    <property type="organism name" value="mouse"/>
</dbReference>
<dbReference type="PRO" id="PR:Q6DID7"/>
<dbReference type="Proteomes" id="UP000000589">
    <property type="component" value="Chromosome 3"/>
</dbReference>
<dbReference type="RNAct" id="Q6DID7">
    <property type="molecule type" value="protein"/>
</dbReference>
<dbReference type="Bgee" id="ENSMUSG00000028173">
    <property type="expression patterns" value="Expressed in vault of skull and 281 other cell types or tissues"/>
</dbReference>
<dbReference type="ExpressionAtlas" id="Q6DID7">
    <property type="expression patterns" value="baseline and differential"/>
</dbReference>
<dbReference type="GO" id="GO:0031410">
    <property type="term" value="C:cytoplasmic vesicle"/>
    <property type="evidence" value="ECO:0000314"/>
    <property type="project" value="UniProtKB"/>
</dbReference>
<dbReference type="GO" id="GO:0005829">
    <property type="term" value="C:cytosol"/>
    <property type="evidence" value="ECO:0007669"/>
    <property type="project" value="Ensembl"/>
</dbReference>
<dbReference type="GO" id="GO:0032839">
    <property type="term" value="C:dendrite cytoplasm"/>
    <property type="evidence" value="ECO:0007669"/>
    <property type="project" value="Ensembl"/>
</dbReference>
<dbReference type="GO" id="GO:0032590">
    <property type="term" value="C:dendrite membrane"/>
    <property type="evidence" value="ECO:0007669"/>
    <property type="project" value="Ensembl"/>
</dbReference>
<dbReference type="GO" id="GO:0031901">
    <property type="term" value="C:early endosome membrane"/>
    <property type="evidence" value="ECO:0007669"/>
    <property type="project" value="UniProtKB-SubCell"/>
</dbReference>
<dbReference type="GO" id="GO:0005783">
    <property type="term" value="C:endoplasmic reticulum"/>
    <property type="evidence" value="ECO:0000314"/>
    <property type="project" value="MGI"/>
</dbReference>
<dbReference type="GO" id="GO:0005789">
    <property type="term" value="C:endoplasmic reticulum membrane"/>
    <property type="evidence" value="ECO:0007669"/>
    <property type="project" value="UniProtKB-SubCell"/>
</dbReference>
<dbReference type="GO" id="GO:0005794">
    <property type="term" value="C:Golgi apparatus"/>
    <property type="evidence" value="ECO:0000314"/>
    <property type="project" value="UniProtKB"/>
</dbReference>
<dbReference type="GO" id="GO:0000139">
    <property type="term" value="C:Golgi membrane"/>
    <property type="evidence" value="ECO:0007669"/>
    <property type="project" value="UniProtKB-SubCell"/>
</dbReference>
<dbReference type="GO" id="GO:0005634">
    <property type="term" value="C:nucleus"/>
    <property type="evidence" value="ECO:0007669"/>
    <property type="project" value="Ensembl"/>
</dbReference>
<dbReference type="GO" id="GO:0005886">
    <property type="term" value="C:plasma membrane"/>
    <property type="evidence" value="ECO:0000314"/>
    <property type="project" value="MGI"/>
</dbReference>
<dbReference type="GO" id="GO:0005802">
    <property type="term" value="C:trans-Golgi network"/>
    <property type="evidence" value="ECO:0007669"/>
    <property type="project" value="Ensembl"/>
</dbReference>
<dbReference type="GO" id="GO:0031852">
    <property type="term" value="F:mu-type opioid receptor binding"/>
    <property type="evidence" value="ECO:0007669"/>
    <property type="project" value="Ensembl"/>
</dbReference>
<dbReference type="GO" id="GO:0017147">
    <property type="term" value="F:Wnt-protein binding"/>
    <property type="evidence" value="ECO:0000314"/>
    <property type="project" value="UniProtKB"/>
</dbReference>
<dbReference type="GO" id="GO:0009948">
    <property type="term" value="P:anterior/posterior axis specification"/>
    <property type="evidence" value="ECO:0000315"/>
    <property type="project" value="UniProtKB"/>
</dbReference>
<dbReference type="GO" id="GO:0071529">
    <property type="term" value="P:cementum mineralization"/>
    <property type="evidence" value="ECO:0000316"/>
    <property type="project" value="MGI"/>
</dbReference>
<dbReference type="GO" id="GO:0031017">
    <property type="term" value="P:exocrine pancreas development"/>
    <property type="evidence" value="ECO:0000315"/>
    <property type="project" value="ParkinsonsUK-UCL"/>
</dbReference>
<dbReference type="GO" id="GO:0030902">
    <property type="term" value="P:hindbrain development"/>
    <property type="evidence" value="ECO:0000315"/>
    <property type="project" value="ParkinsonsUK-UCL"/>
</dbReference>
<dbReference type="GO" id="GO:0006886">
    <property type="term" value="P:intracellular protein transport"/>
    <property type="evidence" value="ECO:0007669"/>
    <property type="project" value="Ensembl"/>
</dbReference>
<dbReference type="GO" id="GO:0001707">
    <property type="term" value="P:mesoderm formation"/>
    <property type="evidence" value="ECO:0000315"/>
    <property type="project" value="UniProtKB"/>
</dbReference>
<dbReference type="GO" id="GO:0030901">
    <property type="term" value="P:midbrain development"/>
    <property type="evidence" value="ECO:0000315"/>
    <property type="project" value="ParkinsonsUK-UCL"/>
</dbReference>
<dbReference type="GO" id="GO:0090263">
    <property type="term" value="P:positive regulation of canonical Wnt signaling pathway"/>
    <property type="evidence" value="ECO:0000315"/>
    <property type="project" value="ParkinsonsUK-UCL"/>
</dbReference>
<dbReference type="GO" id="GO:0050775">
    <property type="term" value="P:positive regulation of dendrite morphogenesis"/>
    <property type="evidence" value="ECO:0007669"/>
    <property type="project" value="Ensembl"/>
</dbReference>
<dbReference type="GO" id="GO:0061357">
    <property type="term" value="P:positive regulation of Wnt protein secretion"/>
    <property type="evidence" value="ECO:0000250"/>
    <property type="project" value="ParkinsonsUK-UCL"/>
</dbReference>
<dbReference type="GO" id="GO:0030177">
    <property type="term" value="P:positive regulation of Wnt signaling pathway"/>
    <property type="evidence" value="ECO:0000250"/>
    <property type="project" value="ParkinsonsUK-UCL"/>
</dbReference>
<dbReference type="GO" id="GO:0061355">
    <property type="term" value="P:Wnt protein secretion"/>
    <property type="evidence" value="ECO:0000314"/>
    <property type="project" value="MGI"/>
</dbReference>
<dbReference type="GO" id="GO:0016055">
    <property type="term" value="P:Wnt signaling pathway"/>
    <property type="evidence" value="ECO:0000315"/>
    <property type="project" value="UniProtKB"/>
</dbReference>
<dbReference type="InterPro" id="IPR047843">
    <property type="entry name" value="WLS-like_TM"/>
</dbReference>
<dbReference type="InterPro" id="IPR053936">
    <property type="entry name" value="WLS_GOLD"/>
</dbReference>
<dbReference type="InterPro" id="IPR009551">
    <property type="entry name" value="Wntless"/>
</dbReference>
<dbReference type="PANTHER" id="PTHR13449">
    <property type="entry name" value="INTEGRAL MEMBRANE PROTEIN GPR177"/>
    <property type="match status" value="1"/>
</dbReference>
<dbReference type="PANTHER" id="PTHR13449:SF2">
    <property type="entry name" value="PROTEIN WNTLESS HOMOLOG"/>
    <property type="match status" value="1"/>
</dbReference>
<dbReference type="Pfam" id="PF06664">
    <property type="entry name" value="WLS-like_TM"/>
    <property type="match status" value="1"/>
</dbReference>
<dbReference type="Pfam" id="PF21883">
    <property type="entry name" value="WLS_GOLD"/>
    <property type="match status" value="1"/>
</dbReference>
<protein>
    <recommendedName>
        <fullName>Protein wntless homolog</fullName>
    </recommendedName>
    <alternativeName>
        <fullName>Integral membrane protein GPR177</fullName>
    </alternativeName>
    <alternativeName>
        <fullName>Protein evenness interrupted homolog</fullName>
        <shortName>EVI</shortName>
    </alternativeName>
</protein>
<organism>
    <name type="scientific">Mus musculus</name>
    <name type="common">Mouse</name>
    <dbReference type="NCBI Taxonomy" id="10090"/>
    <lineage>
        <taxon>Eukaryota</taxon>
        <taxon>Metazoa</taxon>
        <taxon>Chordata</taxon>
        <taxon>Craniata</taxon>
        <taxon>Vertebrata</taxon>
        <taxon>Euteleostomi</taxon>
        <taxon>Mammalia</taxon>
        <taxon>Eutheria</taxon>
        <taxon>Euarchontoglires</taxon>
        <taxon>Glires</taxon>
        <taxon>Rodentia</taxon>
        <taxon>Myomorpha</taxon>
        <taxon>Muroidea</taxon>
        <taxon>Muridae</taxon>
        <taxon>Murinae</taxon>
        <taxon>Mus</taxon>
        <taxon>Mus</taxon>
    </lineage>
</organism>
<evidence type="ECO:0000250" key="1"/>
<evidence type="ECO:0000250" key="2">
    <source>
        <dbReference type="UniProtKB" id="Q5T9L3"/>
    </source>
</evidence>
<evidence type="ECO:0000255" key="3"/>
<evidence type="ECO:0000269" key="4">
    <source>
    </source>
</evidence>
<evidence type="ECO:0000269" key="5">
    <source>
    </source>
</evidence>
<evidence type="ECO:0000269" key="6">
    <source>
    </source>
</evidence>
<evidence type="ECO:0000303" key="7">
    <source>
    </source>
</evidence>
<evidence type="ECO:0000305" key="8"/>
<proteinExistence type="evidence at protein level"/>
<gene>
    <name type="primary">Wls</name>
    <name type="synonym">Gpr177</name>
</gene>
<accession>Q6DID7</accession>
<accession>Q8CE42</accession>
<accession>Q9D2B7</accession>
<sequence>MAGAIIENMSTKKLCIVGGILLVFQIVAFLVGGLIAPAPTTAVPYTAIKCVDVRKNHHKTRWLAPWGPNKCDKIRDIEEAIPREIEANDIVFSVHIPLPSMEMSPWFQFMLFILQLDIAFKLNNQIRENAEISMDVSLGYRDDMFSEWTEMAHERVPRKLKCTFTSPKTPEHEGRYYNCDVLPFMEIGSVAHKYYLLNIRLPVNEKKKINVGIGEIKDIRLVGIHQNGGFTKVWFAMKTFLTPSIFIIMVWYWRRITMMSRPPVLLEKVIFALGISMTFINIPVEWFSIGFDWTWMLLFGDIRQGIFYAMLLSFWIIFCGEHMMDQHERNHIAGYWKQVGPIAVGSFCLFIFDMCERGVQLTNPFYSIWTTDVGTELAMAFIIVAGICLCLYFLFLCFMVFQVFRNISGKQSSLPAMSKVRRLHYEGLIFRFKFLMLITLACAAMTVIFFIVSQVSEGHWKWGGVTVQVSSAFFTGIYGMWNLYVFALMFLYAPSHKNYGEDQSNGDLGVHSGEELQLTTTITHVDGPTEIYKLTRKEAQE</sequence>
<reference key="1">
    <citation type="journal article" date="2005" name="Science">
        <title>The transcriptional landscape of the mammalian genome.</title>
        <authorList>
            <person name="Carninci P."/>
            <person name="Kasukawa T."/>
            <person name="Katayama S."/>
            <person name="Gough J."/>
            <person name="Frith M.C."/>
            <person name="Maeda N."/>
            <person name="Oyama R."/>
            <person name="Ravasi T."/>
            <person name="Lenhard B."/>
            <person name="Wells C."/>
            <person name="Kodzius R."/>
            <person name="Shimokawa K."/>
            <person name="Bajic V.B."/>
            <person name="Brenner S.E."/>
            <person name="Batalov S."/>
            <person name="Forrest A.R."/>
            <person name="Zavolan M."/>
            <person name="Davis M.J."/>
            <person name="Wilming L.G."/>
            <person name="Aidinis V."/>
            <person name="Allen J.E."/>
            <person name="Ambesi-Impiombato A."/>
            <person name="Apweiler R."/>
            <person name="Aturaliya R.N."/>
            <person name="Bailey T.L."/>
            <person name="Bansal M."/>
            <person name="Baxter L."/>
            <person name="Beisel K.W."/>
            <person name="Bersano T."/>
            <person name="Bono H."/>
            <person name="Chalk A.M."/>
            <person name="Chiu K.P."/>
            <person name="Choudhary V."/>
            <person name="Christoffels A."/>
            <person name="Clutterbuck D.R."/>
            <person name="Crowe M.L."/>
            <person name="Dalla E."/>
            <person name="Dalrymple B.P."/>
            <person name="de Bono B."/>
            <person name="Della Gatta G."/>
            <person name="di Bernardo D."/>
            <person name="Down T."/>
            <person name="Engstrom P."/>
            <person name="Fagiolini M."/>
            <person name="Faulkner G."/>
            <person name="Fletcher C.F."/>
            <person name="Fukushima T."/>
            <person name="Furuno M."/>
            <person name="Futaki S."/>
            <person name="Gariboldi M."/>
            <person name="Georgii-Hemming P."/>
            <person name="Gingeras T.R."/>
            <person name="Gojobori T."/>
            <person name="Green R.E."/>
            <person name="Gustincich S."/>
            <person name="Harbers M."/>
            <person name="Hayashi Y."/>
            <person name="Hensch T.K."/>
            <person name="Hirokawa N."/>
            <person name="Hill D."/>
            <person name="Huminiecki L."/>
            <person name="Iacono M."/>
            <person name="Ikeo K."/>
            <person name="Iwama A."/>
            <person name="Ishikawa T."/>
            <person name="Jakt M."/>
            <person name="Kanapin A."/>
            <person name="Katoh M."/>
            <person name="Kawasawa Y."/>
            <person name="Kelso J."/>
            <person name="Kitamura H."/>
            <person name="Kitano H."/>
            <person name="Kollias G."/>
            <person name="Krishnan S.P."/>
            <person name="Kruger A."/>
            <person name="Kummerfeld S.K."/>
            <person name="Kurochkin I.V."/>
            <person name="Lareau L.F."/>
            <person name="Lazarevic D."/>
            <person name="Lipovich L."/>
            <person name="Liu J."/>
            <person name="Liuni S."/>
            <person name="McWilliam S."/>
            <person name="Madan Babu M."/>
            <person name="Madera M."/>
            <person name="Marchionni L."/>
            <person name="Matsuda H."/>
            <person name="Matsuzawa S."/>
            <person name="Miki H."/>
            <person name="Mignone F."/>
            <person name="Miyake S."/>
            <person name="Morris K."/>
            <person name="Mottagui-Tabar S."/>
            <person name="Mulder N."/>
            <person name="Nakano N."/>
            <person name="Nakauchi H."/>
            <person name="Ng P."/>
            <person name="Nilsson R."/>
            <person name="Nishiguchi S."/>
            <person name="Nishikawa S."/>
            <person name="Nori F."/>
            <person name="Ohara O."/>
            <person name="Okazaki Y."/>
            <person name="Orlando V."/>
            <person name="Pang K.C."/>
            <person name="Pavan W.J."/>
            <person name="Pavesi G."/>
            <person name="Pesole G."/>
            <person name="Petrovsky N."/>
            <person name="Piazza S."/>
            <person name="Reed J."/>
            <person name="Reid J.F."/>
            <person name="Ring B.Z."/>
            <person name="Ringwald M."/>
            <person name="Rost B."/>
            <person name="Ruan Y."/>
            <person name="Salzberg S.L."/>
            <person name="Sandelin A."/>
            <person name="Schneider C."/>
            <person name="Schoenbach C."/>
            <person name="Sekiguchi K."/>
            <person name="Semple C.A."/>
            <person name="Seno S."/>
            <person name="Sessa L."/>
            <person name="Sheng Y."/>
            <person name="Shibata Y."/>
            <person name="Shimada H."/>
            <person name="Shimada K."/>
            <person name="Silva D."/>
            <person name="Sinclair B."/>
            <person name="Sperling S."/>
            <person name="Stupka E."/>
            <person name="Sugiura K."/>
            <person name="Sultana R."/>
            <person name="Takenaka Y."/>
            <person name="Taki K."/>
            <person name="Tammoja K."/>
            <person name="Tan S.L."/>
            <person name="Tang S."/>
            <person name="Taylor M.S."/>
            <person name="Tegner J."/>
            <person name="Teichmann S.A."/>
            <person name="Ueda H.R."/>
            <person name="van Nimwegen E."/>
            <person name="Verardo R."/>
            <person name="Wei C.L."/>
            <person name="Yagi K."/>
            <person name="Yamanishi H."/>
            <person name="Zabarovsky E."/>
            <person name="Zhu S."/>
            <person name="Zimmer A."/>
            <person name="Hide W."/>
            <person name="Bult C."/>
            <person name="Grimmond S.M."/>
            <person name="Teasdale R.D."/>
            <person name="Liu E.T."/>
            <person name="Brusic V."/>
            <person name="Quackenbush J."/>
            <person name="Wahlestedt C."/>
            <person name="Mattick J.S."/>
            <person name="Hume D.A."/>
            <person name="Kai C."/>
            <person name="Sasaki D."/>
            <person name="Tomaru Y."/>
            <person name="Fukuda S."/>
            <person name="Kanamori-Katayama M."/>
            <person name="Suzuki M."/>
            <person name="Aoki J."/>
            <person name="Arakawa T."/>
            <person name="Iida J."/>
            <person name="Imamura K."/>
            <person name="Itoh M."/>
            <person name="Kato T."/>
            <person name="Kawaji H."/>
            <person name="Kawagashira N."/>
            <person name="Kawashima T."/>
            <person name="Kojima M."/>
            <person name="Kondo S."/>
            <person name="Konno H."/>
            <person name="Nakano K."/>
            <person name="Ninomiya N."/>
            <person name="Nishio T."/>
            <person name="Okada M."/>
            <person name="Plessy C."/>
            <person name="Shibata K."/>
            <person name="Shiraki T."/>
            <person name="Suzuki S."/>
            <person name="Tagami M."/>
            <person name="Waki K."/>
            <person name="Watahiki A."/>
            <person name="Okamura-Oho Y."/>
            <person name="Suzuki H."/>
            <person name="Kawai J."/>
            <person name="Hayashizaki Y."/>
        </authorList>
    </citation>
    <scope>NUCLEOTIDE SEQUENCE [LARGE SCALE MRNA] (ISOFORMS 1 AND 2)</scope>
    <source>
        <strain>C57BL/6J</strain>
        <tissue>Embryo</tissue>
        <tissue>Head</tissue>
        <tissue>Hippocampus</tissue>
        <tissue>Ovary</tissue>
        <tissue>Skin</tissue>
        <tissue>Uterus</tissue>
    </source>
</reference>
<reference key="2">
    <citation type="journal article" date="2004" name="Genome Res.">
        <title>The status, quality, and expansion of the NIH full-length cDNA project: the Mammalian Gene Collection (MGC).</title>
        <authorList>
            <consortium name="The MGC Project Team"/>
        </authorList>
    </citation>
    <scope>NUCLEOTIDE SEQUENCE [LARGE SCALE MRNA] (ISOFORM 1)</scope>
    <source>
        <strain>C57BL/6J</strain>
        <tissue>Brain</tissue>
    </source>
</reference>
<reference key="3">
    <citation type="journal article" date="2010" name="Dev. Dyn.">
        <title>Expression of GPR177 (Wntless/Evi/Sprinter), a highly conserved Wnt-transport protein, in rat tissues, zebrafish embryos, and cultured human cells.</title>
        <authorList>
            <person name="Jin J."/>
            <person name="Morse M."/>
            <person name="Frey C."/>
            <person name="Petko J."/>
            <person name="Levenson R."/>
        </authorList>
    </citation>
    <scope>TISSUE SPECIFICITY</scope>
    <scope>GLYCOSYLATION</scope>
</reference>
<reference key="4">
    <citation type="journal article" date="2009" name="Proc. Natl. Acad. Sci. U.S.A.">
        <title>Reciprocal regulation of Wnt and Gpr177/mouse Wntless is required for embryonic axis formation.</title>
        <authorList>
            <person name="Fu J."/>
            <person name="Jiang M."/>
            <person name="Mirando A.J."/>
            <person name="Yu H.-M."/>
            <person name="Hsu W."/>
        </authorList>
    </citation>
    <scope>FUNCTION</scope>
    <scope>INDUCTION</scope>
    <scope>TISSUE SPECIFICITY</scope>
    <scope>SUBCELLULAR LOCATION</scope>
    <scope>DISRUPTION PHENOTYPE</scope>
    <scope>DEVELOPMENTAL STAGE</scope>
    <scope>INTERACTION WITH WNT1; WNT3 AND WNT5A</scope>
</reference>
<reference key="5">
    <citation type="journal article" date="2021" name="N. Engl. J. Med.">
        <title>A human pleiotropic multiorgan condition caused by deficient Wnt secretion.</title>
        <authorList>
            <person name="Chai G."/>
            <person name="Szenker-Ravi E."/>
            <person name="Chung C."/>
            <person name="Li Z."/>
            <person name="Wang L."/>
            <person name="Khatoo M."/>
            <person name="Marshall T."/>
            <person name="Jiang N."/>
            <person name="Yang X."/>
            <person name="McEvoy-Venneri J."/>
            <person name="Stanley V."/>
            <person name="Anzenberg P."/>
            <person name="Lang N."/>
            <person name="Wazny V."/>
            <person name="Yu J."/>
            <person name="Virshup D.M."/>
            <person name="Nygaard R."/>
            <person name="Mancia F."/>
            <person name="Merdzanic R."/>
            <person name="Toralles M.B.P."/>
            <person name="Pitanga P.M.L."/>
            <person name="Puri R.D."/>
            <person name="Hernan R."/>
            <person name="Chung W.K."/>
            <person name="Bertoli-Avella A.M."/>
            <person name="Al-Sannaa N."/>
            <person name="Zaki M.S."/>
            <person name="Willert K."/>
            <person name="Reversade B."/>
            <person name="Gleeson J.G."/>
        </authorList>
    </citation>
    <scope>MUTAGENESIS OF TYR-392 AND TYR-478</scope>
</reference>
<keyword id="KW-0025">Alternative splicing</keyword>
<keyword id="KW-1003">Cell membrane</keyword>
<keyword id="KW-0968">Cytoplasmic vesicle</keyword>
<keyword id="KW-0217">Developmental protein</keyword>
<keyword id="KW-0256">Endoplasmic reticulum</keyword>
<keyword id="KW-0967">Endosome</keyword>
<keyword id="KW-0325">Glycoprotein</keyword>
<keyword id="KW-0333">Golgi apparatus</keyword>
<keyword id="KW-0472">Membrane</keyword>
<keyword id="KW-1185">Reference proteome</keyword>
<keyword id="KW-0812">Transmembrane</keyword>
<keyword id="KW-1133">Transmembrane helix</keyword>
<keyword id="KW-0879">Wnt signaling pathway</keyword>
<comment type="function">
    <text evidence="4">Regulates Wnt proteins sorting and secretion in a feedback regulatory mechanism. This reciprocal interaction plays a key role in the regulation of expression, subcellular location, binding and organelle-specific association of Wnt proteins. Also plays an important role in establishment of the anterior-posterior body axis formation during development.</text>
</comment>
<comment type="subunit">
    <text evidence="1 4">Interacts with WNT3A (By similarity). Interacts with WNT1, WNT3 and WNT5.</text>
</comment>
<comment type="interaction">
    <interactant intactId="EBI-15811068">
        <id>Q6DID7-1</id>
    </interactant>
    <interactant intactId="EBI-1570911">
        <id>P04426</id>
        <label>Wnt1</label>
    </interactant>
    <organismsDiffer>false</organismsDiffer>
    <experiments>2</experiments>
</comment>
<comment type="subcellular location">
    <subcellularLocation>
        <location evidence="4">Golgi apparatus membrane</location>
        <topology evidence="4">Multi-pass membrane protein</topology>
    </subcellularLocation>
    <subcellularLocation>
        <location evidence="4">Cytoplasmic vesicle membrane</location>
        <topology evidence="4">Multi-pass membrane protein</topology>
    </subcellularLocation>
    <subcellularLocation>
        <location evidence="2">Cell membrane</location>
        <topology evidence="3">Multi-pass membrane protein</topology>
    </subcellularLocation>
    <subcellularLocation>
        <location evidence="2">Endoplasmic reticulum membrane</location>
        <topology evidence="3">Multi-pass membrane protein</topology>
    </subcellularLocation>
    <subcellularLocation>
        <location evidence="2">Golgi apparatus membrane</location>
        <topology evidence="3">Multi-pass membrane protein</topology>
    </subcellularLocation>
    <subcellularLocation>
        <location evidence="2">Early endosome membrane</location>
        <topology evidence="3">Multi-pass membrane protein</topology>
    </subcellularLocation>
</comment>
<comment type="alternative products">
    <event type="alternative splicing"/>
    <isoform>
        <id>Q6DID7-1</id>
        <name>1</name>
        <sequence type="displayed"/>
    </isoform>
    <isoform>
        <id>Q6DID7-2</id>
        <name>2</name>
        <sequence type="described" ref="VSP_022348"/>
    </isoform>
</comment>
<comment type="tissue specificity">
    <text evidence="4 5">Expressed in the brain, skeletal muscle, heart muscle, lung, gut, liver, and kidney (at protein level) (PubMed:20652957). In the brain, expressed in the cortex, striatum, hippocampus and to a lesser extent in the cerebellum (at protein level) (PubMed:20652957). Expressed in kidney, lung, skin, intestine, brain, spinal cord, skeleton, eyes, excretion glands, tooth and palatal shelves (PubMed:19841259). In the cerebellum, expressed in Purkinje cells (PubMed:19841259).</text>
</comment>
<comment type="developmental stage">
    <text evidence="4">Detected at 6.25 dpc in the proximal epiblast at the junction between the embryonic and extraembryonic tissue. Later expression is more restricted to the primitive streak and mesoderm extending to the distal tip of the embryo. Strong expression is found in both posterior visceral endoderm and epiblast at the prestreak, but switched to the mesoderm at late-streak.</text>
</comment>
<comment type="induction">
    <text evidence="4">Up-regulated by WNT1. Transcriptionally activated by beta-catenin and by LEF/TCF-dependent transcription.</text>
</comment>
<comment type="PTM">
    <text evidence="5">N-glycosylated.</text>
</comment>
<comment type="disruption phenotype">
    <text evidence="4">Mice display embryonic lethality before 10.5 dpc. Embryos show defects in the establishment of the body axis and in the primitive streak and mesoderm formation.</text>
</comment>
<comment type="similarity">
    <text evidence="8">Belongs to the wntless family.</text>
</comment>
<comment type="sequence caution" evidence="8">
    <conflict type="erroneous initiation">
        <sequence resource="EMBL-CDS" id="AAH18381"/>
    </conflict>
</comment>
<comment type="sequence caution" evidence="8">
    <conflict type="erroneous initiation">
        <sequence resource="EMBL-CDS" id="BAC26266"/>
    </conflict>
</comment>
<comment type="sequence caution" evidence="8">
    <conflict type="erroneous initiation">
        <sequence resource="EMBL-CDS" id="BAC26300"/>
    </conflict>
</comment>
<comment type="sequence caution" evidence="8">
    <conflict type="erroneous initiation">
        <sequence resource="EMBL-CDS" id="BAC32102"/>
    </conflict>
</comment>
<comment type="sequence caution" evidence="8">
    <conflict type="erroneous initiation">
        <sequence resource="EMBL-CDS" id="BAC33950"/>
    </conflict>
</comment>
<feature type="chain" id="PRO_0000271779" description="Protein wntless homolog">
    <location>
        <begin position="1"/>
        <end position="541"/>
    </location>
</feature>
<feature type="topological domain" description="Cytoplasmic" evidence="2">
    <location>
        <begin position="1"/>
        <end position="15"/>
    </location>
</feature>
<feature type="transmembrane region" description="Helical; Name=1" evidence="3">
    <location>
        <begin position="16"/>
        <end position="36"/>
    </location>
</feature>
<feature type="topological domain" description="Lumenal" evidence="2">
    <location>
        <begin position="37"/>
        <end position="232"/>
    </location>
</feature>
<feature type="transmembrane region" description="Helical; Name=2" evidence="3">
    <location>
        <begin position="233"/>
        <end position="253"/>
    </location>
</feature>
<feature type="topological domain" description="Cytoplasmic" evidence="2">
    <location>
        <begin position="254"/>
        <end position="268"/>
    </location>
</feature>
<feature type="transmembrane region" description="Helical; Name=3" evidence="3">
    <location>
        <begin position="269"/>
        <end position="289"/>
    </location>
</feature>
<feature type="topological domain" description="Lumenal" evidence="2">
    <location>
        <begin position="290"/>
        <end position="303"/>
    </location>
</feature>
<feature type="transmembrane region" description="Helical; Name=4" evidence="3">
    <location>
        <begin position="304"/>
        <end position="324"/>
    </location>
</feature>
<feature type="topological domain" description="Cytoplasmic" evidence="2">
    <location>
        <begin position="325"/>
        <end position="331"/>
    </location>
</feature>
<feature type="transmembrane region" description="Helical; Name=5" evidence="3">
    <location>
        <begin position="332"/>
        <end position="352"/>
    </location>
</feature>
<feature type="topological domain" description="Lumenal" evidence="2">
    <location>
        <begin position="353"/>
        <end position="380"/>
    </location>
</feature>
<feature type="transmembrane region" description="Helical; Name=6" evidence="3">
    <location>
        <begin position="381"/>
        <end position="401"/>
    </location>
</feature>
<feature type="topological domain" description="Cytoplasmic" evidence="2">
    <location>
        <begin position="402"/>
        <end position="431"/>
    </location>
</feature>
<feature type="transmembrane region" description="Helical; Name=7" evidence="3">
    <location>
        <begin position="432"/>
        <end position="452"/>
    </location>
</feature>
<feature type="topological domain" description="Lumenal" evidence="2">
    <location>
        <begin position="453"/>
        <end position="471"/>
    </location>
</feature>
<feature type="transmembrane region" description="Helical; Name=8" evidence="3">
    <location>
        <begin position="472"/>
        <end position="492"/>
    </location>
</feature>
<feature type="topological domain" description="Cytoplasmic" evidence="2">
    <location>
        <begin position="493"/>
        <end position="541"/>
    </location>
</feature>
<feature type="region of interest" description="Interaction with Wnt proteins">
    <location>
        <begin position="101"/>
        <end position="232"/>
    </location>
</feature>
<feature type="splice variant" id="VSP_022348" description="In isoform 2." evidence="7">
    <location>
        <begin position="1"/>
        <end position="100"/>
    </location>
</feature>
<feature type="mutagenesis site" description="Knockin mice have several structural anomalies recapitulating the major defects observed in patients with Zaki syndrome." evidence="6">
    <original>Y</original>
    <variation>C</variation>
    <location>
        <position position="392"/>
    </location>
</feature>
<feature type="mutagenesis site" description="Knockin mice have several structural anomalies recapitulating the major defects observed in patients with Zaki syndrome." evidence="6">
    <original>Y</original>
    <variation>C</variation>
    <location>
        <position position="478"/>
    </location>
</feature>
<feature type="sequence conflict" description="In Ref. 1; BAC26266." evidence="8" ref="1">
    <original>I</original>
    <variation>V</variation>
    <location>
        <position position="113"/>
    </location>
</feature>
<feature type="sequence conflict" description="In Ref. 1; BAC26266." evidence="8" ref="1">
    <original>Q</original>
    <variation>L</variation>
    <location>
        <position position="540"/>
    </location>
</feature>